<sequence length="299" mass="34212">MKPDAAQVKTFLLQLQDSLCQQLSAVDGAPFIEDAWQREGGGGGRSRVLREGRVFEQAGVNFSHVHGDAMPASATAHRPELAGRSFEAMGVSLVVHPLNPYVPTSHANVRFFIAEKPGADPVWWFGGGFDLTPYYGFEEDAVHWHRTARDLCLPFGEEVYPRYKKWCDDYFYLKHRQEQRGIGGLFFDDLNTPDFDHCFAFMQAVGNGYADAYLPIVERRKATPYGERERHFQLYRRGRYVEFNLVWDRGTLFGLQTGGRTESILMSMPPLVRWEYDYQPEPGSPEAALSEFIQVRDWL</sequence>
<proteinExistence type="inferred from homology"/>
<protein>
    <recommendedName>
        <fullName evidence="1">Oxygen-dependent coproporphyrinogen-III oxidase</fullName>
        <shortName evidence="1">CPO</shortName>
        <shortName evidence="1">Coprogen oxidase</shortName>
        <shortName evidence="1">Coproporphyrinogenase</shortName>
        <ecNumber evidence="1">1.3.3.3</ecNumber>
    </recommendedName>
</protein>
<gene>
    <name evidence="1" type="primary">hemF</name>
    <name type="ordered locus">KPN78578_27280</name>
    <name type="ORF">KPN_02779</name>
</gene>
<evidence type="ECO:0000255" key="1">
    <source>
        <dbReference type="HAMAP-Rule" id="MF_00333"/>
    </source>
</evidence>
<keyword id="KW-0963">Cytoplasm</keyword>
<keyword id="KW-0350">Heme biosynthesis</keyword>
<keyword id="KW-0479">Metal-binding</keyword>
<keyword id="KW-0560">Oxidoreductase</keyword>
<keyword id="KW-0627">Porphyrin biosynthesis</keyword>
<dbReference type="EC" id="1.3.3.3" evidence="1"/>
<dbReference type="EMBL" id="CP000647">
    <property type="protein sequence ID" value="ABR78189.1"/>
    <property type="molecule type" value="Genomic_DNA"/>
</dbReference>
<dbReference type="RefSeq" id="WP_004145617.1">
    <property type="nucleotide sequence ID" value="NC_009648.1"/>
</dbReference>
<dbReference type="SMR" id="A6TC68"/>
<dbReference type="STRING" id="272620.KPN_02779"/>
<dbReference type="PaxDb" id="272620-KPN_02779"/>
<dbReference type="EnsemblBacteria" id="ABR78189">
    <property type="protein sequence ID" value="ABR78189"/>
    <property type="gene ID" value="KPN_02779"/>
</dbReference>
<dbReference type="KEGG" id="kpn:KPN_02779"/>
<dbReference type="HOGENOM" id="CLU_026169_0_1_6"/>
<dbReference type="UniPathway" id="UPA00251">
    <property type="reaction ID" value="UER00322"/>
</dbReference>
<dbReference type="Proteomes" id="UP000000265">
    <property type="component" value="Chromosome"/>
</dbReference>
<dbReference type="GO" id="GO:0005737">
    <property type="term" value="C:cytoplasm"/>
    <property type="evidence" value="ECO:0007669"/>
    <property type="project" value="UniProtKB-SubCell"/>
</dbReference>
<dbReference type="GO" id="GO:0004109">
    <property type="term" value="F:coproporphyrinogen oxidase activity"/>
    <property type="evidence" value="ECO:0007669"/>
    <property type="project" value="UniProtKB-UniRule"/>
</dbReference>
<dbReference type="GO" id="GO:0046872">
    <property type="term" value="F:metal ion binding"/>
    <property type="evidence" value="ECO:0007669"/>
    <property type="project" value="UniProtKB-KW"/>
</dbReference>
<dbReference type="GO" id="GO:0042803">
    <property type="term" value="F:protein homodimerization activity"/>
    <property type="evidence" value="ECO:0000250"/>
    <property type="project" value="UniProtKB"/>
</dbReference>
<dbReference type="GO" id="GO:0006782">
    <property type="term" value="P:protoporphyrinogen IX biosynthetic process"/>
    <property type="evidence" value="ECO:0007669"/>
    <property type="project" value="UniProtKB-UniRule"/>
</dbReference>
<dbReference type="FunFam" id="3.40.1500.10:FF:000001">
    <property type="entry name" value="Oxygen-dependent coproporphyrinogen-III oxidase"/>
    <property type="match status" value="1"/>
</dbReference>
<dbReference type="Gene3D" id="3.40.1500.10">
    <property type="entry name" value="Coproporphyrinogen III oxidase, aerobic"/>
    <property type="match status" value="1"/>
</dbReference>
<dbReference type="HAMAP" id="MF_00333">
    <property type="entry name" value="Coprogen_oxidas"/>
    <property type="match status" value="1"/>
</dbReference>
<dbReference type="InterPro" id="IPR001260">
    <property type="entry name" value="Coprogen_oxidase_aer"/>
</dbReference>
<dbReference type="InterPro" id="IPR036406">
    <property type="entry name" value="Coprogen_oxidase_aer_sf"/>
</dbReference>
<dbReference type="InterPro" id="IPR018375">
    <property type="entry name" value="Coprogen_oxidase_CS"/>
</dbReference>
<dbReference type="NCBIfam" id="NF003727">
    <property type="entry name" value="PRK05330.1"/>
    <property type="match status" value="1"/>
</dbReference>
<dbReference type="PANTHER" id="PTHR10755">
    <property type="entry name" value="COPROPORPHYRINOGEN III OXIDASE, MITOCHONDRIAL"/>
    <property type="match status" value="1"/>
</dbReference>
<dbReference type="PANTHER" id="PTHR10755:SF0">
    <property type="entry name" value="OXYGEN-DEPENDENT COPROPORPHYRINOGEN-III OXIDASE, MITOCHONDRIAL"/>
    <property type="match status" value="1"/>
</dbReference>
<dbReference type="Pfam" id="PF01218">
    <property type="entry name" value="Coprogen_oxidas"/>
    <property type="match status" value="1"/>
</dbReference>
<dbReference type="PIRSF" id="PIRSF000166">
    <property type="entry name" value="Coproporphyri_ox"/>
    <property type="match status" value="1"/>
</dbReference>
<dbReference type="PRINTS" id="PR00073">
    <property type="entry name" value="COPRGNOXDASE"/>
</dbReference>
<dbReference type="SUPFAM" id="SSF102886">
    <property type="entry name" value="Coproporphyrinogen III oxidase"/>
    <property type="match status" value="1"/>
</dbReference>
<dbReference type="PROSITE" id="PS01021">
    <property type="entry name" value="COPROGEN_OXIDASE"/>
    <property type="match status" value="1"/>
</dbReference>
<organism>
    <name type="scientific">Klebsiella pneumoniae subsp. pneumoniae (strain ATCC 700721 / MGH 78578)</name>
    <dbReference type="NCBI Taxonomy" id="272620"/>
    <lineage>
        <taxon>Bacteria</taxon>
        <taxon>Pseudomonadati</taxon>
        <taxon>Pseudomonadota</taxon>
        <taxon>Gammaproteobacteria</taxon>
        <taxon>Enterobacterales</taxon>
        <taxon>Enterobacteriaceae</taxon>
        <taxon>Klebsiella/Raoultella group</taxon>
        <taxon>Klebsiella</taxon>
        <taxon>Klebsiella pneumoniae complex</taxon>
    </lineage>
</organism>
<accession>A6TC68</accession>
<comment type="function">
    <text evidence="1">Involved in the heme biosynthesis. Catalyzes the aerobic oxidative decarboxylation of propionate groups of rings A and B of coproporphyrinogen-III to yield the vinyl groups in protoporphyrinogen-IX.</text>
</comment>
<comment type="catalytic activity">
    <reaction evidence="1">
        <text>coproporphyrinogen III + O2 + 2 H(+) = protoporphyrinogen IX + 2 CO2 + 2 H2O</text>
        <dbReference type="Rhea" id="RHEA:18257"/>
        <dbReference type="ChEBI" id="CHEBI:15377"/>
        <dbReference type="ChEBI" id="CHEBI:15378"/>
        <dbReference type="ChEBI" id="CHEBI:15379"/>
        <dbReference type="ChEBI" id="CHEBI:16526"/>
        <dbReference type="ChEBI" id="CHEBI:57307"/>
        <dbReference type="ChEBI" id="CHEBI:57309"/>
        <dbReference type="EC" id="1.3.3.3"/>
    </reaction>
</comment>
<comment type="cofactor">
    <cofactor evidence="1">
        <name>a divalent metal cation</name>
        <dbReference type="ChEBI" id="CHEBI:60240"/>
    </cofactor>
</comment>
<comment type="pathway">
    <text evidence="1">Porphyrin-containing compound metabolism; protoporphyrin-IX biosynthesis; protoporphyrinogen-IX from coproporphyrinogen-III (O2 route): step 1/1.</text>
</comment>
<comment type="subunit">
    <text evidence="1">Homodimer.</text>
</comment>
<comment type="subcellular location">
    <subcellularLocation>
        <location evidence="1">Cytoplasm</location>
    </subcellularLocation>
</comment>
<comment type="similarity">
    <text evidence="1">Belongs to the aerobic coproporphyrinogen-III oxidase family.</text>
</comment>
<feature type="chain" id="PRO_1000019471" description="Oxygen-dependent coproporphyrinogen-III oxidase">
    <location>
        <begin position="1"/>
        <end position="299"/>
    </location>
</feature>
<feature type="region of interest" description="Important for dimerization" evidence="1">
    <location>
        <begin position="240"/>
        <end position="275"/>
    </location>
</feature>
<feature type="active site" description="Proton donor" evidence="1">
    <location>
        <position position="106"/>
    </location>
</feature>
<feature type="binding site" evidence="1">
    <location>
        <position position="92"/>
    </location>
    <ligand>
        <name>substrate</name>
    </ligand>
</feature>
<feature type="binding site" evidence="1">
    <location>
        <position position="96"/>
    </location>
    <ligand>
        <name>a divalent metal cation</name>
        <dbReference type="ChEBI" id="CHEBI:60240"/>
    </ligand>
</feature>
<feature type="binding site" evidence="1">
    <location>
        <position position="106"/>
    </location>
    <ligand>
        <name>a divalent metal cation</name>
        <dbReference type="ChEBI" id="CHEBI:60240"/>
    </ligand>
</feature>
<feature type="binding site" evidence="1">
    <location>
        <begin position="108"/>
        <end position="110"/>
    </location>
    <ligand>
        <name>substrate</name>
    </ligand>
</feature>
<feature type="binding site" evidence="1">
    <location>
        <position position="145"/>
    </location>
    <ligand>
        <name>a divalent metal cation</name>
        <dbReference type="ChEBI" id="CHEBI:60240"/>
    </ligand>
</feature>
<feature type="binding site" evidence="1">
    <location>
        <position position="175"/>
    </location>
    <ligand>
        <name>a divalent metal cation</name>
        <dbReference type="ChEBI" id="CHEBI:60240"/>
    </ligand>
</feature>
<feature type="binding site" evidence="1">
    <location>
        <begin position="258"/>
        <end position="260"/>
    </location>
    <ligand>
        <name>substrate</name>
    </ligand>
</feature>
<feature type="site" description="Important for dimerization" evidence="1">
    <location>
        <position position="175"/>
    </location>
</feature>
<reference key="1">
    <citation type="submission" date="2006-09" db="EMBL/GenBank/DDBJ databases">
        <authorList>
            <consortium name="The Klebsiella pneumonia Genome Sequencing Project"/>
            <person name="McClelland M."/>
            <person name="Sanderson E.K."/>
            <person name="Spieth J."/>
            <person name="Clifton W.S."/>
            <person name="Latreille P."/>
            <person name="Sabo A."/>
            <person name="Pepin K."/>
            <person name="Bhonagiri V."/>
            <person name="Porwollik S."/>
            <person name="Ali J."/>
            <person name="Wilson R.K."/>
        </authorList>
    </citation>
    <scope>NUCLEOTIDE SEQUENCE [LARGE SCALE GENOMIC DNA]</scope>
    <source>
        <strain>ATCC 700721 / MGH 78578</strain>
    </source>
</reference>
<name>HEM6_KLEP7</name>